<name>CP4AA_MOUSE</name>
<gene>
    <name evidence="7 10" type="primary">Cyp4a10</name>
    <name type="synonym">Cyp4a-10</name>
</gene>
<reference key="1">
    <citation type="journal article" date="1994" name="Biochim. Biophys. Acta">
        <title>Deduced amino acid sequence of a murine cytochrome P-450 Cyp4a protein: developmental and hormonal regulation in liver and kidney.</title>
        <authorList>
            <person name="Henderson C.J."/>
            <person name="Bammler T."/>
            <person name="Wolf C.R."/>
        </authorList>
    </citation>
    <scope>NUCLEOTIDE SEQUENCE [MRNA]</scope>
    <source>
        <strain>C57BL/6J</strain>
        <tissue>Liver</tissue>
    </source>
</reference>
<reference key="2">
    <citation type="submission" date="1998-10" db="EMBL/GenBank/DDBJ databases">
        <title>Polymorphism of cyp 4A10 sequence between C57BL/6 and ddY mouse.</title>
        <authorList>
            <person name="Yasumura N."/>
            <person name="Ikeda T."/>
        </authorList>
    </citation>
    <scope>NUCLEOTIDE SEQUENCE [MRNA]</scope>
    <source>
        <strain>ddY</strain>
        <tissue>Liver</tissue>
    </source>
</reference>
<reference key="3">
    <citation type="journal article" date="2005" name="Science">
        <title>The transcriptional landscape of the mammalian genome.</title>
        <authorList>
            <person name="Carninci P."/>
            <person name="Kasukawa T."/>
            <person name="Katayama S."/>
            <person name="Gough J."/>
            <person name="Frith M.C."/>
            <person name="Maeda N."/>
            <person name="Oyama R."/>
            <person name="Ravasi T."/>
            <person name="Lenhard B."/>
            <person name="Wells C."/>
            <person name="Kodzius R."/>
            <person name="Shimokawa K."/>
            <person name="Bajic V.B."/>
            <person name="Brenner S.E."/>
            <person name="Batalov S."/>
            <person name="Forrest A.R."/>
            <person name="Zavolan M."/>
            <person name="Davis M.J."/>
            <person name="Wilming L.G."/>
            <person name="Aidinis V."/>
            <person name="Allen J.E."/>
            <person name="Ambesi-Impiombato A."/>
            <person name="Apweiler R."/>
            <person name="Aturaliya R.N."/>
            <person name="Bailey T.L."/>
            <person name="Bansal M."/>
            <person name="Baxter L."/>
            <person name="Beisel K.W."/>
            <person name="Bersano T."/>
            <person name="Bono H."/>
            <person name="Chalk A.M."/>
            <person name="Chiu K.P."/>
            <person name="Choudhary V."/>
            <person name="Christoffels A."/>
            <person name="Clutterbuck D.R."/>
            <person name="Crowe M.L."/>
            <person name="Dalla E."/>
            <person name="Dalrymple B.P."/>
            <person name="de Bono B."/>
            <person name="Della Gatta G."/>
            <person name="di Bernardo D."/>
            <person name="Down T."/>
            <person name="Engstrom P."/>
            <person name="Fagiolini M."/>
            <person name="Faulkner G."/>
            <person name="Fletcher C.F."/>
            <person name="Fukushima T."/>
            <person name="Furuno M."/>
            <person name="Futaki S."/>
            <person name="Gariboldi M."/>
            <person name="Georgii-Hemming P."/>
            <person name="Gingeras T.R."/>
            <person name="Gojobori T."/>
            <person name="Green R.E."/>
            <person name="Gustincich S."/>
            <person name="Harbers M."/>
            <person name="Hayashi Y."/>
            <person name="Hensch T.K."/>
            <person name="Hirokawa N."/>
            <person name="Hill D."/>
            <person name="Huminiecki L."/>
            <person name="Iacono M."/>
            <person name="Ikeo K."/>
            <person name="Iwama A."/>
            <person name="Ishikawa T."/>
            <person name="Jakt M."/>
            <person name="Kanapin A."/>
            <person name="Katoh M."/>
            <person name="Kawasawa Y."/>
            <person name="Kelso J."/>
            <person name="Kitamura H."/>
            <person name="Kitano H."/>
            <person name="Kollias G."/>
            <person name="Krishnan S.P."/>
            <person name="Kruger A."/>
            <person name="Kummerfeld S.K."/>
            <person name="Kurochkin I.V."/>
            <person name="Lareau L.F."/>
            <person name="Lazarevic D."/>
            <person name="Lipovich L."/>
            <person name="Liu J."/>
            <person name="Liuni S."/>
            <person name="McWilliam S."/>
            <person name="Madan Babu M."/>
            <person name="Madera M."/>
            <person name="Marchionni L."/>
            <person name="Matsuda H."/>
            <person name="Matsuzawa S."/>
            <person name="Miki H."/>
            <person name="Mignone F."/>
            <person name="Miyake S."/>
            <person name="Morris K."/>
            <person name="Mottagui-Tabar S."/>
            <person name="Mulder N."/>
            <person name="Nakano N."/>
            <person name="Nakauchi H."/>
            <person name="Ng P."/>
            <person name="Nilsson R."/>
            <person name="Nishiguchi S."/>
            <person name="Nishikawa S."/>
            <person name="Nori F."/>
            <person name="Ohara O."/>
            <person name="Okazaki Y."/>
            <person name="Orlando V."/>
            <person name="Pang K.C."/>
            <person name="Pavan W.J."/>
            <person name="Pavesi G."/>
            <person name="Pesole G."/>
            <person name="Petrovsky N."/>
            <person name="Piazza S."/>
            <person name="Reed J."/>
            <person name="Reid J.F."/>
            <person name="Ring B.Z."/>
            <person name="Ringwald M."/>
            <person name="Rost B."/>
            <person name="Ruan Y."/>
            <person name="Salzberg S.L."/>
            <person name="Sandelin A."/>
            <person name="Schneider C."/>
            <person name="Schoenbach C."/>
            <person name="Sekiguchi K."/>
            <person name="Semple C.A."/>
            <person name="Seno S."/>
            <person name="Sessa L."/>
            <person name="Sheng Y."/>
            <person name="Shibata Y."/>
            <person name="Shimada H."/>
            <person name="Shimada K."/>
            <person name="Silva D."/>
            <person name="Sinclair B."/>
            <person name="Sperling S."/>
            <person name="Stupka E."/>
            <person name="Sugiura K."/>
            <person name="Sultana R."/>
            <person name="Takenaka Y."/>
            <person name="Taki K."/>
            <person name="Tammoja K."/>
            <person name="Tan S.L."/>
            <person name="Tang S."/>
            <person name="Taylor M.S."/>
            <person name="Tegner J."/>
            <person name="Teichmann S.A."/>
            <person name="Ueda H.R."/>
            <person name="van Nimwegen E."/>
            <person name="Verardo R."/>
            <person name="Wei C.L."/>
            <person name="Yagi K."/>
            <person name="Yamanishi H."/>
            <person name="Zabarovsky E."/>
            <person name="Zhu S."/>
            <person name="Zimmer A."/>
            <person name="Hide W."/>
            <person name="Bult C."/>
            <person name="Grimmond S.M."/>
            <person name="Teasdale R.D."/>
            <person name="Liu E.T."/>
            <person name="Brusic V."/>
            <person name="Quackenbush J."/>
            <person name="Wahlestedt C."/>
            <person name="Mattick J.S."/>
            <person name="Hume D.A."/>
            <person name="Kai C."/>
            <person name="Sasaki D."/>
            <person name="Tomaru Y."/>
            <person name="Fukuda S."/>
            <person name="Kanamori-Katayama M."/>
            <person name="Suzuki M."/>
            <person name="Aoki J."/>
            <person name="Arakawa T."/>
            <person name="Iida J."/>
            <person name="Imamura K."/>
            <person name="Itoh M."/>
            <person name="Kato T."/>
            <person name="Kawaji H."/>
            <person name="Kawagashira N."/>
            <person name="Kawashima T."/>
            <person name="Kojima M."/>
            <person name="Kondo S."/>
            <person name="Konno H."/>
            <person name="Nakano K."/>
            <person name="Ninomiya N."/>
            <person name="Nishio T."/>
            <person name="Okada M."/>
            <person name="Plessy C."/>
            <person name="Shibata K."/>
            <person name="Shiraki T."/>
            <person name="Suzuki S."/>
            <person name="Tagami M."/>
            <person name="Waki K."/>
            <person name="Watahiki A."/>
            <person name="Okamura-Oho Y."/>
            <person name="Suzuki H."/>
            <person name="Kawai J."/>
            <person name="Hayashizaki Y."/>
        </authorList>
    </citation>
    <scope>NUCLEOTIDE SEQUENCE [LARGE SCALE MRNA]</scope>
    <source>
        <strain>C57BL/6J</strain>
        <tissue>Kidney</tissue>
    </source>
</reference>
<reference key="4">
    <citation type="journal article" date="2009" name="PLoS Biol.">
        <title>Lineage-specific biology revealed by a finished genome assembly of the mouse.</title>
        <authorList>
            <person name="Church D.M."/>
            <person name="Goodstadt L."/>
            <person name="Hillier L.W."/>
            <person name="Zody M.C."/>
            <person name="Goldstein S."/>
            <person name="She X."/>
            <person name="Bult C.J."/>
            <person name="Agarwala R."/>
            <person name="Cherry J.L."/>
            <person name="DiCuccio M."/>
            <person name="Hlavina W."/>
            <person name="Kapustin Y."/>
            <person name="Meric P."/>
            <person name="Maglott D."/>
            <person name="Birtle Z."/>
            <person name="Marques A.C."/>
            <person name="Graves T."/>
            <person name="Zhou S."/>
            <person name="Teague B."/>
            <person name="Potamousis K."/>
            <person name="Churas C."/>
            <person name="Place M."/>
            <person name="Herschleb J."/>
            <person name="Runnheim R."/>
            <person name="Forrest D."/>
            <person name="Amos-Landgraf J."/>
            <person name="Schwartz D.C."/>
            <person name="Cheng Z."/>
            <person name="Lindblad-Toh K."/>
            <person name="Eichler E.E."/>
            <person name="Ponting C.P."/>
        </authorList>
    </citation>
    <scope>NUCLEOTIDE SEQUENCE [LARGE SCALE GENOMIC DNA]</scope>
    <source>
        <strain>C57BL/6J</strain>
    </source>
</reference>
<reference key="5">
    <citation type="journal article" date="2004" name="Genome Res.">
        <title>The status, quality, and expansion of the NIH full-length cDNA project: the Mammalian Gene Collection (MGC).</title>
        <authorList>
            <consortium name="The MGC Project Team"/>
        </authorList>
    </citation>
    <scope>NUCLEOTIDE SEQUENCE [LARGE SCALE MRNA]</scope>
    <source>
        <strain>FVB/N</strain>
        <tissue>Kidney</tissue>
    </source>
</reference>
<reference key="6">
    <citation type="journal article" date="2006" name="J. Clin. Invest.">
        <title>Salt-sensitive hypertension is associated with dysfunctional Cyp4a10 gene and kidney epithelial sodium channel.</title>
        <authorList>
            <person name="Nakagawa K."/>
            <person name="Holla V.R."/>
            <person name="Wei Y."/>
            <person name="Wang W.H."/>
            <person name="Gatica A."/>
            <person name="Wei S."/>
            <person name="Mei S."/>
            <person name="Miller C.M."/>
            <person name="Cha D.R."/>
            <person name="Price E. Jr."/>
            <person name="Zent R."/>
            <person name="Pozzi A."/>
            <person name="Breyer M.D."/>
            <person name="Guan Y."/>
            <person name="Falck J.R."/>
            <person name="Waterman M.R."/>
            <person name="Capdevila J.H."/>
        </authorList>
    </citation>
    <scope>DISRUPTION PHENOTYPE</scope>
</reference>
<reference key="7">
    <citation type="journal article" date="2007" name="Biochem. J.">
        <title>Mouse Cyp4a isoforms: enzymatic properties, gender- and strain-specific expression, and role in renal 20-hydroxyeicosatetraenoic acid formation.</title>
        <authorList>
            <person name="Muller D.N."/>
            <person name="Schmidt C."/>
            <person name="Barbosa-Sicard E."/>
            <person name="Wellner M."/>
            <person name="Gross V."/>
            <person name="Hercule H."/>
            <person name="Markovic M."/>
            <person name="Honeck H."/>
            <person name="Luft F.C."/>
            <person name="Schunck W.H."/>
        </authorList>
    </citation>
    <scope>FUNCTION</scope>
    <scope>CATALYTIC ACTIVITY</scope>
    <scope>BIOPHYSICOCHEMICAL PROPERTIES</scope>
    <scope>TISSUE SPECIFICITY</scope>
</reference>
<accession>O88833</accession>
<accession>A2A976</accession>
<accession>Q9DCS5</accession>
<feature type="chain" id="PRO_0000051815" description="Cytochrome P450 4A10">
    <location>
        <begin position="1"/>
        <end position="509"/>
    </location>
</feature>
<feature type="transmembrane region" description="Helical" evidence="4">
    <location>
        <begin position="15"/>
        <end position="35"/>
    </location>
</feature>
<feature type="transmembrane region" description="Helical" evidence="4">
    <location>
        <begin position="121"/>
        <end position="141"/>
    </location>
</feature>
<feature type="binding site" description="covalent" evidence="3">
    <location>
        <position position="320"/>
    </location>
    <ligand>
        <name>heme</name>
        <dbReference type="ChEBI" id="CHEBI:30413"/>
    </ligand>
</feature>
<feature type="binding site" description="axial binding residue" evidence="1">
    <location>
        <position position="456"/>
    </location>
    <ligand>
        <name>heme</name>
        <dbReference type="ChEBI" id="CHEBI:30413"/>
    </ligand>
    <ligandPart>
        <name>Fe</name>
        <dbReference type="ChEBI" id="CHEBI:18248"/>
    </ligandPart>
</feature>
<feature type="modified residue" description="Phosphoserine" evidence="2">
    <location>
        <position position="439"/>
    </location>
</feature>
<feature type="sequence conflict" description="In Ref. 1; X69296." evidence="8" ref="1">
    <original>H</original>
    <variation>L</variation>
    <location>
        <position position="62"/>
    </location>
</feature>
<feature type="sequence conflict" description="In Ref. 2; BAA33804 and 5; AAH10747/AAH51049." evidence="8" ref="2 5">
    <original>K</original>
    <variation>Q</variation>
    <location>
        <position position="64"/>
    </location>
</feature>
<feature type="sequence conflict" description="In Ref. 2; BAA33804 and 5; AAH10747/AAH51049." evidence="8" ref="2 5">
    <original>Q</original>
    <variation>H</variation>
    <location>
        <position position="69"/>
    </location>
</feature>
<feature type="sequence conflict" description="In Ref. 1; X69296." evidence="8" ref="1">
    <original>I</original>
    <variation>N</variation>
    <location>
        <position position="234"/>
    </location>
</feature>
<proteinExistence type="evidence at protein level"/>
<sequence>MSVSALSPTRFADSLSGFLQVASVLGLLLLLVKAVQFYLHRQWLLKAFQQFPSPPFHWFFGHEKFKGDQELQEIVSCIENFPSAFPRWFWGSKAYLTVYDPDYMKVILGRSDPKANGAYRLLAPWIGYGLLLLNGQPWFQHRRMLTPAFHYDILKPYVKNMADSIRLMLDKWERLADQDSSIEIFQHISLMTLDTVMKCAFSHKGSVQVDGNYRTYLQAIGDLNNLFHSRVRNIFHQNDTIYKLSSNGRLAKQACQLAHDHTDGVIKLRKDQLQDEGELEKIKKKRRLDFLDILLFARMENGDSMSDKDLRAEVDTFMFEGHDTTASGVSWIFYALATHPDHQQRCREEVQSLLGDGSSITWDHLDQIPYTTMCIKEALRLYPPVPGIVRELSTSVTFPDGRSLPKGVQVTLSIYGLHHNPKVWPNPEVFDPSRFAPDSPRHSHSFLPFSGGARNCIGKQFAMSELKVIVALTLLRFELLPDPTRVPMPLARLVLKSKNGIYLHLKKLH</sequence>
<comment type="function">
    <text evidence="1 6">A cytochrome P450 monooxygenase involved in the metabolism of fatty acids. Catalyzes predominantly the oxidation of the terminal carbon (omega-oxidation) of long-chain fatty acids (By similarity). Acts as a major omega-hydroxylase for dodecanoic (lauric) acid in liver (By similarity) (PubMed:17112342). In kidney, may play an important role in omega-hydroxylation of (5Z,8Z,11Z,14Z)-eicosatetraenoic acid (arachidonate) to 20-hydroxyeicosatetraenoic acid (20-HETE), a signaling molecule acting both as vasoconstrictive and natriuretic with overall effect on arterial blood pressure (By similarity). Also participates in the formation of anti-inflammatory hydroxyepoxyeicosatrienoic acids (HEETs) in kidney by converting 8,9-epoxyeicosatrienoic acid (EET) to 20,8,9-HEET, an activator of PPARA. Displays substantially lower fatty acid omega-1 hydroxylase activity (By similarity). Mechanistically, uses molecular oxygen inserting one oxygen atom into a substrate, and reducing the second into a water molecule, with two electrons provided by NADPH via cytochrome P450 reductase (CPR; NADPH-ferrihemoprotein reductase).</text>
</comment>
<comment type="catalytic activity">
    <reaction evidence="1">
        <text>an omega-methyl-long-chain fatty acid + reduced [NADPH--hemoprotein reductase] + O2 = an omega-hydroxy-long-chain fatty acid + oxidized [NADPH--hemoprotein reductase] + H2O + H(+)</text>
        <dbReference type="Rhea" id="RHEA:56748"/>
        <dbReference type="Rhea" id="RHEA-COMP:11964"/>
        <dbReference type="Rhea" id="RHEA-COMP:11965"/>
        <dbReference type="ChEBI" id="CHEBI:15377"/>
        <dbReference type="ChEBI" id="CHEBI:15378"/>
        <dbReference type="ChEBI" id="CHEBI:15379"/>
        <dbReference type="ChEBI" id="CHEBI:57618"/>
        <dbReference type="ChEBI" id="CHEBI:58210"/>
        <dbReference type="ChEBI" id="CHEBI:140991"/>
        <dbReference type="ChEBI" id="CHEBI:140992"/>
        <dbReference type="EC" id="1.14.14.80"/>
    </reaction>
    <physiologicalReaction direction="left-to-right" evidence="1">
        <dbReference type="Rhea" id="RHEA:56749"/>
    </physiologicalReaction>
</comment>
<comment type="catalytic activity">
    <reaction evidence="6">
        <text>dodecanoate + reduced [NADPH--hemoprotein reductase] + O2 = 12-hydroxydodecanoate + oxidized [NADPH--hemoprotein reductase] + H2O + H(+)</text>
        <dbReference type="Rhea" id="RHEA:38947"/>
        <dbReference type="Rhea" id="RHEA-COMP:11964"/>
        <dbReference type="Rhea" id="RHEA-COMP:11965"/>
        <dbReference type="ChEBI" id="CHEBI:15377"/>
        <dbReference type="ChEBI" id="CHEBI:15378"/>
        <dbReference type="ChEBI" id="CHEBI:15379"/>
        <dbReference type="ChEBI" id="CHEBI:18262"/>
        <dbReference type="ChEBI" id="CHEBI:36204"/>
        <dbReference type="ChEBI" id="CHEBI:57618"/>
        <dbReference type="ChEBI" id="CHEBI:58210"/>
    </reaction>
    <physiologicalReaction direction="left-to-right" evidence="9">
        <dbReference type="Rhea" id="RHEA:38948"/>
    </physiologicalReaction>
</comment>
<comment type="catalytic activity">
    <reaction evidence="6">
        <text>dodecanoate + reduced [NADPH--hemoprotein reductase] + O2 = 11-hydroxydodecanoate + oxidized [NADPH--hemoprotein reductase] + H2O + H(+)</text>
        <dbReference type="Rhea" id="RHEA:39751"/>
        <dbReference type="Rhea" id="RHEA-COMP:11964"/>
        <dbReference type="Rhea" id="RHEA-COMP:11965"/>
        <dbReference type="ChEBI" id="CHEBI:15377"/>
        <dbReference type="ChEBI" id="CHEBI:15378"/>
        <dbReference type="ChEBI" id="CHEBI:15379"/>
        <dbReference type="ChEBI" id="CHEBI:18262"/>
        <dbReference type="ChEBI" id="CHEBI:57618"/>
        <dbReference type="ChEBI" id="CHEBI:58210"/>
        <dbReference type="ChEBI" id="CHEBI:76628"/>
    </reaction>
    <physiologicalReaction direction="left-to-right" evidence="9">
        <dbReference type="Rhea" id="RHEA:39752"/>
    </physiologicalReaction>
</comment>
<comment type="catalytic activity">
    <reaction evidence="1">
        <text>tetradecanoate + reduced [NADPH--hemoprotein reductase] + O2 = 14-hydroxytetradecanoate + oxidized [NADPH--hemoprotein reductase] + H2O + H(+)</text>
        <dbReference type="Rhea" id="RHEA:40203"/>
        <dbReference type="Rhea" id="RHEA-COMP:11964"/>
        <dbReference type="Rhea" id="RHEA-COMP:11965"/>
        <dbReference type="ChEBI" id="CHEBI:15377"/>
        <dbReference type="ChEBI" id="CHEBI:15378"/>
        <dbReference type="ChEBI" id="CHEBI:15379"/>
        <dbReference type="ChEBI" id="CHEBI:30807"/>
        <dbReference type="ChEBI" id="CHEBI:57618"/>
        <dbReference type="ChEBI" id="CHEBI:58210"/>
        <dbReference type="ChEBI" id="CHEBI:77033"/>
    </reaction>
    <physiologicalReaction direction="left-to-right" evidence="1">
        <dbReference type="Rhea" id="RHEA:40204"/>
    </physiologicalReaction>
</comment>
<comment type="catalytic activity">
    <reaction evidence="1">
        <text>hexadecanoate + reduced [NADPH--hemoprotein reductase] + O2 = 16-hydroxyhexadecanoate + oxidized [NADPH--hemoprotein reductase] + H2O + H(+)</text>
        <dbReference type="Rhea" id="RHEA:40199"/>
        <dbReference type="Rhea" id="RHEA-COMP:11964"/>
        <dbReference type="Rhea" id="RHEA-COMP:11965"/>
        <dbReference type="ChEBI" id="CHEBI:7896"/>
        <dbReference type="ChEBI" id="CHEBI:15377"/>
        <dbReference type="ChEBI" id="CHEBI:15378"/>
        <dbReference type="ChEBI" id="CHEBI:15379"/>
        <dbReference type="ChEBI" id="CHEBI:55329"/>
        <dbReference type="ChEBI" id="CHEBI:57618"/>
        <dbReference type="ChEBI" id="CHEBI:58210"/>
        <dbReference type="EC" id="1.14.14.80"/>
    </reaction>
    <physiologicalReaction direction="left-to-right" evidence="1">
        <dbReference type="Rhea" id="RHEA:40200"/>
    </physiologicalReaction>
</comment>
<comment type="catalytic activity">
    <reaction evidence="1">
        <text>(9Z)-octadecenoate + reduced [NADPH--hemoprotein reductase] + O2 = 18-hydroxy-(9Z)-octadecenoate + oxidized [NADPH--hemoprotein reductase] + H2O + H(+)</text>
        <dbReference type="Rhea" id="RHEA:41728"/>
        <dbReference type="Rhea" id="RHEA-COMP:11964"/>
        <dbReference type="Rhea" id="RHEA-COMP:11965"/>
        <dbReference type="ChEBI" id="CHEBI:15377"/>
        <dbReference type="ChEBI" id="CHEBI:15378"/>
        <dbReference type="ChEBI" id="CHEBI:15379"/>
        <dbReference type="ChEBI" id="CHEBI:30823"/>
        <dbReference type="ChEBI" id="CHEBI:57618"/>
        <dbReference type="ChEBI" id="CHEBI:58210"/>
        <dbReference type="ChEBI" id="CHEBI:78424"/>
        <dbReference type="EC" id="1.14.14.80"/>
    </reaction>
    <physiologicalReaction direction="left-to-right" evidence="1">
        <dbReference type="Rhea" id="RHEA:41729"/>
    </physiologicalReaction>
</comment>
<comment type="catalytic activity">
    <reaction evidence="1">
        <text>(9Z,12Z)-octadecadienoate + reduced [NADPH--hemoprotein reductase] + O2 = 18-hydroxy-(9Z,12Z)-octadecadienoate + oxidized [NADPH--hemoprotein reductase] + H2O + H(+)</text>
        <dbReference type="Rhea" id="RHEA:60580"/>
        <dbReference type="Rhea" id="RHEA-COMP:11964"/>
        <dbReference type="Rhea" id="RHEA-COMP:11965"/>
        <dbReference type="ChEBI" id="CHEBI:15377"/>
        <dbReference type="ChEBI" id="CHEBI:15378"/>
        <dbReference type="ChEBI" id="CHEBI:15379"/>
        <dbReference type="ChEBI" id="CHEBI:30245"/>
        <dbReference type="ChEBI" id="CHEBI:57618"/>
        <dbReference type="ChEBI" id="CHEBI:58210"/>
        <dbReference type="ChEBI" id="CHEBI:132029"/>
    </reaction>
    <physiologicalReaction direction="left-to-right" evidence="1">
        <dbReference type="Rhea" id="RHEA:60581"/>
    </physiologicalReaction>
</comment>
<comment type="catalytic activity">
    <reaction evidence="1">
        <text>(9Z,12Z)-octadecadienoate + reduced [NADPH--hemoprotein reductase] + O2 = 17-hydroxy-(9Z,12Z)-octadecadienoate + oxidized [NADPH--hemoprotein reductase] + H2O + H(+)</text>
        <dbReference type="Rhea" id="RHEA:60932"/>
        <dbReference type="Rhea" id="RHEA-COMP:11964"/>
        <dbReference type="Rhea" id="RHEA-COMP:11965"/>
        <dbReference type="ChEBI" id="CHEBI:15377"/>
        <dbReference type="ChEBI" id="CHEBI:15378"/>
        <dbReference type="ChEBI" id="CHEBI:15379"/>
        <dbReference type="ChEBI" id="CHEBI:30245"/>
        <dbReference type="ChEBI" id="CHEBI:57618"/>
        <dbReference type="ChEBI" id="CHEBI:58210"/>
        <dbReference type="ChEBI" id="CHEBI:144041"/>
    </reaction>
    <physiologicalReaction direction="left-to-right" evidence="1">
        <dbReference type="Rhea" id="RHEA:60933"/>
    </physiologicalReaction>
</comment>
<comment type="catalytic activity">
    <reaction evidence="1">
        <text>(5Z,8Z,11Z,14Z)-eicosatetraenoate + reduced [NADPH--hemoprotein reductase] + O2 = 20-hydroxy-(5Z,8Z,11Z,14Z)-eicosatetraenoate + oxidized [NADPH--hemoprotein reductase] + H2O + H(+)</text>
        <dbReference type="Rhea" id="RHEA:39755"/>
        <dbReference type="Rhea" id="RHEA-COMP:11964"/>
        <dbReference type="Rhea" id="RHEA-COMP:11965"/>
        <dbReference type="ChEBI" id="CHEBI:15377"/>
        <dbReference type="ChEBI" id="CHEBI:15378"/>
        <dbReference type="ChEBI" id="CHEBI:15379"/>
        <dbReference type="ChEBI" id="CHEBI:32395"/>
        <dbReference type="ChEBI" id="CHEBI:57618"/>
        <dbReference type="ChEBI" id="CHEBI:58210"/>
        <dbReference type="ChEBI" id="CHEBI:76624"/>
    </reaction>
    <physiologicalReaction direction="left-to-right" evidence="1">
        <dbReference type="Rhea" id="RHEA:39756"/>
    </physiologicalReaction>
</comment>
<comment type="catalytic activity">
    <reaction evidence="1">
        <text>8,9-epoxy-(5Z,11Z,14Z)-eicosatrienoate + reduced [NADPH--hemoprotein reductase] + O2 = 20-hydroxy-8,9-epoxy-(5Z,11Z,14Z)-eicosatrienoate + oxidized [NADPH--hemoprotein reductase] + H2O + H(+)</text>
        <dbReference type="Rhea" id="RHEA:53572"/>
        <dbReference type="Rhea" id="RHEA-COMP:11964"/>
        <dbReference type="Rhea" id="RHEA-COMP:11965"/>
        <dbReference type="ChEBI" id="CHEBI:15377"/>
        <dbReference type="ChEBI" id="CHEBI:15378"/>
        <dbReference type="ChEBI" id="CHEBI:15379"/>
        <dbReference type="ChEBI" id="CHEBI:57618"/>
        <dbReference type="ChEBI" id="CHEBI:58210"/>
        <dbReference type="ChEBI" id="CHEBI:84025"/>
        <dbReference type="ChEBI" id="CHEBI:137474"/>
    </reaction>
    <physiologicalReaction direction="left-to-right" evidence="1">
        <dbReference type="Rhea" id="RHEA:53573"/>
    </physiologicalReaction>
</comment>
<comment type="cofactor">
    <cofactor evidence="1">
        <name>heme</name>
        <dbReference type="ChEBI" id="CHEBI:30413"/>
    </cofactor>
</comment>
<comment type="biophysicochemical properties">
    <kinetics>
        <KM evidence="6">2 uM for dodecanoate</KM>
        <Vmax evidence="6">55.0 nmol/min/nmol enzyme toward dodecanoate</Vmax>
    </kinetics>
</comment>
<comment type="subcellular location">
    <subcellularLocation>
        <location evidence="1">Endoplasmic reticulum membrane</location>
        <topology evidence="4">Multi-pass membrane protein</topology>
    </subcellularLocation>
    <subcellularLocation>
        <location evidence="1">Microsome membrane</location>
        <topology evidence="4">Multi-pass membrane protein</topology>
    </subcellularLocation>
</comment>
<comment type="tissue specificity">
    <text evidence="6">Highly expressed in the kidneys of both genders.</text>
</comment>
<comment type="disruption phenotype">
    <text evidence="5">Mutant mice are hypertensive due to constitutive activation of renal epithelial sodium channels and increased sodium reabsorption.</text>
</comment>
<comment type="similarity">
    <text evidence="4">Belongs to the cytochrome P450 family.</text>
</comment>
<protein>
    <recommendedName>
        <fullName>Cytochrome P450 4A10</fullName>
    </recommendedName>
    <alternativeName>
        <fullName>CYPIVA10</fullName>
    </alternativeName>
    <alternativeName>
        <fullName>Cytochrome P450-LA-omega 1</fullName>
    </alternativeName>
    <alternativeName>
        <fullName>Cytochrome P452</fullName>
    </alternativeName>
    <alternativeName>
        <fullName>Lauric acid omega-hydroxylase</fullName>
    </alternativeName>
    <alternativeName>
        <fullName>Long-chain fatty acid omega-monooxygenase</fullName>
        <ecNumber evidence="1">1.14.14.80</ecNumber>
    </alternativeName>
</protein>
<organism>
    <name type="scientific">Mus musculus</name>
    <name type="common">Mouse</name>
    <dbReference type="NCBI Taxonomy" id="10090"/>
    <lineage>
        <taxon>Eukaryota</taxon>
        <taxon>Metazoa</taxon>
        <taxon>Chordata</taxon>
        <taxon>Craniata</taxon>
        <taxon>Vertebrata</taxon>
        <taxon>Euteleostomi</taxon>
        <taxon>Mammalia</taxon>
        <taxon>Eutheria</taxon>
        <taxon>Euarchontoglires</taxon>
        <taxon>Glires</taxon>
        <taxon>Rodentia</taxon>
        <taxon>Myomorpha</taxon>
        <taxon>Muroidea</taxon>
        <taxon>Muridae</taxon>
        <taxon>Murinae</taxon>
        <taxon>Mus</taxon>
        <taxon>Mus</taxon>
    </lineage>
</organism>
<dbReference type="EC" id="1.14.14.80" evidence="1"/>
<dbReference type="EMBL" id="X69296">
    <property type="status" value="NOT_ANNOTATED_CDS"/>
    <property type="molecule type" value="mRNA"/>
</dbReference>
<dbReference type="EMBL" id="AB018421">
    <property type="protein sequence ID" value="BAA33804.1"/>
    <property type="molecule type" value="mRNA"/>
</dbReference>
<dbReference type="EMBL" id="AK002528">
    <property type="protein sequence ID" value="BAB22165.1"/>
    <property type="molecule type" value="mRNA"/>
</dbReference>
<dbReference type="EMBL" id="AL627182">
    <property type="status" value="NOT_ANNOTATED_CDS"/>
    <property type="molecule type" value="Genomic_DNA"/>
</dbReference>
<dbReference type="EMBL" id="BC010747">
    <property type="protein sequence ID" value="AAH10747.1"/>
    <property type="molecule type" value="mRNA"/>
</dbReference>
<dbReference type="EMBL" id="BC051049">
    <property type="protein sequence ID" value="AAH51049.1"/>
    <property type="molecule type" value="mRNA"/>
</dbReference>
<dbReference type="CCDS" id="CCDS18492.1"/>
<dbReference type="PIR" id="S47553">
    <property type="entry name" value="S47553"/>
</dbReference>
<dbReference type="RefSeq" id="NP_034141.3">
    <property type="nucleotide sequence ID" value="NM_010011.3"/>
</dbReference>
<dbReference type="SMR" id="O88833"/>
<dbReference type="FunCoup" id="O88833">
    <property type="interactions" value="580"/>
</dbReference>
<dbReference type="STRING" id="10090.ENSMUSP00000061126"/>
<dbReference type="SwissLipids" id="SLP:000000399"/>
<dbReference type="iPTMnet" id="O88833"/>
<dbReference type="PhosphoSitePlus" id="O88833"/>
<dbReference type="SwissPalm" id="O88833"/>
<dbReference type="jPOST" id="O88833"/>
<dbReference type="PaxDb" id="10090-ENSMUSP00000061126"/>
<dbReference type="ProteomicsDB" id="284152"/>
<dbReference type="DNASU" id="13117"/>
<dbReference type="Ensembl" id="ENSMUST00000058785.10">
    <property type="protein sequence ID" value="ENSMUSP00000061126.4"/>
    <property type="gene ID" value="ENSMUSG00000066072.14"/>
</dbReference>
<dbReference type="GeneID" id="13117"/>
<dbReference type="KEGG" id="mmu:13117"/>
<dbReference type="UCSC" id="uc008uex.2">
    <property type="organism name" value="mouse"/>
</dbReference>
<dbReference type="AGR" id="MGI:88611"/>
<dbReference type="CTD" id="13117"/>
<dbReference type="MGI" id="MGI:88611">
    <property type="gene designation" value="Cyp4a10"/>
</dbReference>
<dbReference type="VEuPathDB" id="HostDB:ENSMUSG00000066072"/>
<dbReference type="eggNOG" id="KOG0157">
    <property type="taxonomic scope" value="Eukaryota"/>
</dbReference>
<dbReference type="GeneTree" id="ENSGT00940000163570"/>
<dbReference type="HOGENOM" id="CLU_001570_5_1_1"/>
<dbReference type="InParanoid" id="O88833"/>
<dbReference type="OMA" id="KWFMSTS"/>
<dbReference type="OrthoDB" id="1470350at2759"/>
<dbReference type="PhylomeDB" id="O88833"/>
<dbReference type="TreeFam" id="TF105088"/>
<dbReference type="Reactome" id="R-MMU-211935">
    <property type="pathway name" value="Fatty acids"/>
</dbReference>
<dbReference type="Reactome" id="R-MMU-211958">
    <property type="pathway name" value="Miscellaneous substrates"/>
</dbReference>
<dbReference type="Reactome" id="R-MMU-211979">
    <property type="pathway name" value="Eicosanoids"/>
</dbReference>
<dbReference type="Reactome" id="R-MMU-2142691">
    <property type="pathway name" value="Synthesis of Leukotrienes (LT) and Eoxins (EX)"/>
</dbReference>
<dbReference type="BioGRID-ORCS" id="13117">
    <property type="hits" value="5 hits in 48 CRISPR screens"/>
</dbReference>
<dbReference type="PRO" id="PR:O88833"/>
<dbReference type="Proteomes" id="UP000000589">
    <property type="component" value="Chromosome 4"/>
</dbReference>
<dbReference type="RNAct" id="O88833">
    <property type="molecule type" value="protein"/>
</dbReference>
<dbReference type="Bgee" id="ENSMUSG00000066072">
    <property type="expression patterns" value="Expressed in left lobe of liver and 54 other cell types or tissues"/>
</dbReference>
<dbReference type="ExpressionAtlas" id="O88833">
    <property type="expression patterns" value="baseline and differential"/>
</dbReference>
<dbReference type="GO" id="GO:0005789">
    <property type="term" value="C:endoplasmic reticulum membrane"/>
    <property type="evidence" value="ECO:0007669"/>
    <property type="project" value="UniProtKB-SubCell"/>
</dbReference>
<dbReference type="GO" id="GO:0043231">
    <property type="term" value="C:intracellular membrane-bounded organelle"/>
    <property type="evidence" value="ECO:0000314"/>
    <property type="project" value="UniProtKB"/>
</dbReference>
<dbReference type="GO" id="GO:0052869">
    <property type="term" value="F:arachidonate omega-hydroxylase activity"/>
    <property type="evidence" value="ECO:0007669"/>
    <property type="project" value="RHEA"/>
</dbReference>
<dbReference type="GO" id="GO:0020037">
    <property type="term" value="F:heme binding"/>
    <property type="evidence" value="ECO:0007669"/>
    <property type="project" value="InterPro"/>
</dbReference>
<dbReference type="GO" id="GO:0005506">
    <property type="term" value="F:iron ion binding"/>
    <property type="evidence" value="ECO:0007669"/>
    <property type="project" value="InterPro"/>
</dbReference>
<dbReference type="GO" id="GO:0102033">
    <property type="term" value="F:long-chain fatty acid omega-hydroxylase activity"/>
    <property type="evidence" value="ECO:0007669"/>
    <property type="project" value="UniProtKB-EC"/>
</dbReference>
<dbReference type="GO" id="GO:0004497">
    <property type="term" value="F:monooxygenase activity"/>
    <property type="evidence" value="ECO:0000304"/>
    <property type="project" value="UniProtKB"/>
</dbReference>
<dbReference type="GO" id="GO:0006631">
    <property type="term" value="P:fatty acid metabolic process"/>
    <property type="evidence" value="ECO:0000304"/>
    <property type="project" value="UniProtKB"/>
</dbReference>
<dbReference type="CDD" id="cd20678">
    <property type="entry name" value="CYP4B-like"/>
    <property type="match status" value="1"/>
</dbReference>
<dbReference type="FunFam" id="1.10.630.10:FF:000005">
    <property type="entry name" value="cytochrome P450 4F22 isoform X2"/>
    <property type="match status" value="1"/>
</dbReference>
<dbReference type="Gene3D" id="1.10.630.10">
    <property type="entry name" value="Cytochrome P450"/>
    <property type="match status" value="1"/>
</dbReference>
<dbReference type="InterPro" id="IPR001128">
    <property type="entry name" value="Cyt_P450"/>
</dbReference>
<dbReference type="InterPro" id="IPR017972">
    <property type="entry name" value="Cyt_P450_CS"/>
</dbReference>
<dbReference type="InterPro" id="IPR002401">
    <property type="entry name" value="Cyt_P450_E_grp-I"/>
</dbReference>
<dbReference type="InterPro" id="IPR036396">
    <property type="entry name" value="Cyt_P450_sf"/>
</dbReference>
<dbReference type="InterPro" id="IPR050196">
    <property type="entry name" value="Cytochrome_P450_Monoox"/>
</dbReference>
<dbReference type="PANTHER" id="PTHR24291:SF165">
    <property type="entry name" value="CYTOCHROME P450 4A10-RELATED"/>
    <property type="match status" value="1"/>
</dbReference>
<dbReference type="PANTHER" id="PTHR24291">
    <property type="entry name" value="CYTOCHROME P450 FAMILY 4"/>
    <property type="match status" value="1"/>
</dbReference>
<dbReference type="Pfam" id="PF00067">
    <property type="entry name" value="p450"/>
    <property type="match status" value="1"/>
</dbReference>
<dbReference type="PRINTS" id="PR00463">
    <property type="entry name" value="EP450I"/>
</dbReference>
<dbReference type="PRINTS" id="PR00385">
    <property type="entry name" value="P450"/>
</dbReference>
<dbReference type="SUPFAM" id="SSF48264">
    <property type="entry name" value="Cytochrome P450"/>
    <property type="match status" value="1"/>
</dbReference>
<dbReference type="PROSITE" id="PS00086">
    <property type="entry name" value="CYTOCHROME_P450"/>
    <property type="match status" value="1"/>
</dbReference>
<evidence type="ECO:0000250" key="1">
    <source>
        <dbReference type="UniProtKB" id="P08516"/>
    </source>
</evidence>
<evidence type="ECO:0000250" key="2">
    <source>
        <dbReference type="UniProtKB" id="P20816"/>
    </source>
</evidence>
<evidence type="ECO:0000250" key="3">
    <source>
        <dbReference type="UniProtKB" id="P51869"/>
    </source>
</evidence>
<evidence type="ECO:0000255" key="4"/>
<evidence type="ECO:0000269" key="5">
    <source>
    </source>
</evidence>
<evidence type="ECO:0000269" key="6">
    <source>
    </source>
</evidence>
<evidence type="ECO:0000303" key="7">
    <source>
    </source>
</evidence>
<evidence type="ECO:0000305" key="8"/>
<evidence type="ECO:0000305" key="9">
    <source>
    </source>
</evidence>
<evidence type="ECO:0000312" key="10">
    <source>
        <dbReference type="MGI" id="MGI:88611"/>
    </source>
</evidence>
<keyword id="KW-0256">Endoplasmic reticulum</keyword>
<keyword id="KW-0276">Fatty acid metabolism</keyword>
<keyword id="KW-0349">Heme</keyword>
<keyword id="KW-0408">Iron</keyword>
<keyword id="KW-0443">Lipid metabolism</keyword>
<keyword id="KW-0472">Membrane</keyword>
<keyword id="KW-0479">Metal-binding</keyword>
<keyword id="KW-0492">Microsome</keyword>
<keyword id="KW-0503">Monooxygenase</keyword>
<keyword id="KW-0521">NADP</keyword>
<keyword id="KW-0560">Oxidoreductase</keyword>
<keyword id="KW-0597">Phosphoprotein</keyword>
<keyword id="KW-1185">Reference proteome</keyword>
<keyword id="KW-0812">Transmembrane</keyword>
<keyword id="KW-1133">Transmembrane helix</keyword>